<protein>
    <recommendedName>
        <fullName>Defensin-like protein 2</fullName>
    </recommendedName>
    <alternativeName>
        <fullName>Fabatin-2</fullName>
    </alternativeName>
</protein>
<name>DEF2_VICFA</name>
<reference key="1">
    <citation type="journal article" date="1997" name="FEMS Microbiol. Lett.">
        <title>Fabatins: new antimicrobial plant peptides.</title>
        <authorList>
            <person name="Zhang Y."/>
            <person name="Lewis K."/>
        </authorList>
    </citation>
    <scope>PROTEIN SEQUENCE</scope>
    <source>
        <tissue>Seed</tissue>
    </source>
</reference>
<dbReference type="PIR" id="B58445">
    <property type="entry name" value="B58445"/>
</dbReference>
<dbReference type="SMR" id="P81457"/>
<dbReference type="GO" id="GO:0042742">
    <property type="term" value="P:defense response to bacterium"/>
    <property type="evidence" value="ECO:0007669"/>
    <property type="project" value="UniProtKB-KW"/>
</dbReference>
<dbReference type="GO" id="GO:0050832">
    <property type="term" value="P:defense response to fungus"/>
    <property type="evidence" value="ECO:0007669"/>
    <property type="project" value="UniProtKB-KW"/>
</dbReference>
<dbReference type="GO" id="GO:0031640">
    <property type="term" value="P:killing of cells of another organism"/>
    <property type="evidence" value="ECO:0007669"/>
    <property type="project" value="UniProtKB-KW"/>
</dbReference>
<dbReference type="CDD" id="cd00107">
    <property type="entry name" value="Knot1"/>
    <property type="match status" value="1"/>
</dbReference>
<dbReference type="Gene3D" id="3.30.30.10">
    <property type="entry name" value="Knottin, scorpion toxin-like"/>
    <property type="match status" value="1"/>
</dbReference>
<dbReference type="InterPro" id="IPR008176">
    <property type="entry name" value="Defensin_plant"/>
</dbReference>
<dbReference type="InterPro" id="IPR003614">
    <property type="entry name" value="Scorpion_toxin-like"/>
</dbReference>
<dbReference type="InterPro" id="IPR036574">
    <property type="entry name" value="Scorpion_toxin-like_sf"/>
</dbReference>
<dbReference type="Pfam" id="PF00304">
    <property type="entry name" value="Gamma-thionin"/>
    <property type="match status" value="1"/>
</dbReference>
<dbReference type="PRINTS" id="PR00288">
    <property type="entry name" value="PUROTHIONIN"/>
</dbReference>
<dbReference type="SMART" id="SM00505">
    <property type="entry name" value="Knot1"/>
    <property type="match status" value="1"/>
</dbReference>
<dbReference type="SUPFAM" id="SSF57095">
    <property type="entry name" value="Scorpion toxin-like"/>
    <property type="match status" value="1"/>
</dbReference>
<dbReference type="PROSITE" id="PS00940">
    <property type="entry name" value="GAMMA_THIONIN"/>
    <property type="match status" value="1"/>
</dbReference>
<feature type="chain" id="PRO_0000074259" description="Defensin-like protein 2">
    <location>
        <begin position="1"/>
        <end position="47"/>
    </location>
</feature>
<feature type="disulfide bond" evidence="1">
    <location>
        <begin position="5"/>
        <end position="47"/>
    </location>
</feature>
<feature type="disulfide bond" evidence="1">
    <location>
        <begin position="16"/>
        <end position="36"/>
    </location>
</feature>
<feature type="disulfide bond" evidence="1">
    <location>
        <begin position="22"/>
        <end position="43"/>
    </location>
</feature>
<feature type="disulfide bond" evidence="1">
    <location>
        <begin position="26"/>
        <end position="45"/>
    </location>
</feature>
<proteinExistence type="evidence at protein level"/>
<organism>
    <name type="scientific">Vicia faba</name>
    <name type="common">Broad bean</name>
    <name type="synonym">Faba vulgaris</name>
    <dbReference type="NCBI Taxonomy" id="3906"/>
    <lineage>
        <taxon>Eukaryota</taxon>
        <taxon>Viridiplantae</taxon>
        <taxon>Streptophyta</taxon>
        <taxon>Embryophyta</taxon>
        <taxon>Tracheophyta</taxon>
        <taxon>Spermatophyta</taxon>
        <taxon>Magnoliopsida</taxon>
        <taxon>eudicotyledons</taxon>
        <taxon>Gunneridae</taxon>
        <taxon>Pentapetalae</taxon>
        <taxon>rosids</taxon>
        <taxon>fabids</taxon>
        <taxon>Fabales</taxon>
        <taxon>Fabaceae</taxon>
        <taxon>Papilionoideae</taxon>
        <taxon>50 kb inversion clade</taxon>
        <taxon>NPAAA clade</taxon>
        <taxon>Hologalegina</taxon>
        <taxon>IRL clade</taxon>
        <taxon>Fabeae</taxon>
        <taxon>Vicia</taxon>
    </lineage>
</organism>
<comment type="function">
    <text>Fabatins have antibacterial activity against Gram-positive and Gram-negative bacteria. High activity against P.aeruginosa. No activity against S.cerevisiae and C.albicans.</text>
</comment>
<comment type="similarity">
    <text evidence="2">Belongs to the DEFL family.</text>
</comment>
<keyword id="KW-0044">Antibiotic</keyword>
<keyword id="KW-0929">Antimicrobial</keyword>
<keyword id="KW-0903">Direct protein sequencing</keyword>
<keyword id="KW-1015">Disulfide bond</keyword>
<keyword id="KW-0295">Fungicide</keyword>
<keyword id="KW-0611">Plant defense</keyword>
<accession>P81457</accession>
<sequence length="47" mass="5206">LLGRCKVKSNRFNGPCLTDTHCSTVCRGEGYKGGDCHGLRRRCMCLC</sequence>
<evidence type="ECO:0000250" key="1"/>
<evidence type="ECO:0000305" key="2"/>